<gene>
    <name evidence="1" type="primary">miaB</name>
    <name type="ordered locus">GSU2198</name>
</gene>
<organism>
    <name type="scientific">Geobacter sulfurreducens (strain ATCC 51573 / DSM 12127 / PCA)</name>
    <dbReference type="NCBI Taxonomy" id="243231"/>
    <lineage>
        <taxon>Bacteria</taxon>
        <taxon>Pseudomonadati</taxon>
        <taxon>Thermodesulfobacteriota</taxon>
        <taxon>Desulfuromonadia</taxon>
        <taxon>Geobacterales</taxon>
        <taxon>Geobacteraceae</taxon>
        <taxon>Geobacter</taxon>
    </lineage>
</organism>
<keyword id="KW-0004">4Fe-4S</keyword>
<keyword id="KW-0963">Cytoplasm</keyword>
<keyword id="KW-0408">Iron</keyword>
<keyword id="KW-0411">Iron-sulfur</keyword>
<keyword id="KW-0479">Metal-binding</keyword>
<keyword id="KW-1185">Reference proteome</keyword>
<keyword id="KW-0949">S-adenosyl-L-methionine</keyword>
<keyword id="KW-0808">Transferase</keyword>
<keyword id="KW-0819">tRNA processing</keyword>
<accession>Q74B44</accession>
<dbReference type="EC" id="2.8.4.3" evidence="1"/>
<dbReference type="EMBL" id="AE017180">
    <property type="protein sequence ID" value="AAR35574.1"/>
    <property type="molecule type" value="Genomic_DNA"/>
</dbReference>
<dbReference type="RefSeq" id="NP_953247.1">
    <property type="nucleotide sequence ID" value="NC_002939.5"/>
</dbReference>
<dbReference type="RefSeq" id="WP_010942838.1">
    <property type="nucleotide sequence ID" value="NC_002939.5"/>
</dbReference>
<dbReference type="SMR" id="Q74B44"/>
<dbReference type="FunCoup" id="Q74B44">
    <property type="interactions" value="547"/>
</dbReference>
<dbReference type="STRING" id="243231.GSU2198"/>
<dbReference type="EnsemblBacteria" id="AAR35574">
    <property type="protein sequence ID" value="AAR35574"/>
    <property type="gene ID" value="GSU2198"/>
</dbReference>
<dbReference type="KEGG" id="gsu:GSU2198"/>
<dbReference type="PATRIC" id="fig|243231.5.peg.2230"/>
<dbReference type="eggNOG" id="COG0621">
    <property type="taxonomic scope" value="Bacteria"/>
</dbReference>
<dbReference type="HOGENOM" id="CLU_018697_2_0_7"/>
<dbReference type="InParanoid" id="Q74B44"/>
<dbReference type="OrthoDB" id="9805215at2"/>
<dbReference type="Proteomes" id="UP000000577">
    <property type="component" value="Chromosome"/>
</dbReference>
<dbReference type="GO" id="GO:0005829">
    <property type="term" value="C:cytosol"/>
    <property type="evidence" value="ECO:0000318"/>
    <property type="project" value="GO_Central"/>
</dbReference>
<dbReference type="GO" id="GO:0051539">
    <property type="term" value="F:4 iron, 4 sulfur cluster binding"/>
    <property type="evidence" value="ECO:0000318"/>
    <property type="project" value="GO_Central"/>
</dbReference>
<dbReference type="GO" id="GO:0046872">
    <property type="term" value="F:metal ion binding"/>
    <property type="evidence" value="ECO:0007669"/>
    <property type="project" value="UniProtKB-KW"/>
</dbReference>
<dbReference type="GO" id="GO:0035597">
    <property type="term" value="F:N6-isopentenyladenosine methylthiotransferase activity"/>
    <property type="evidence" value="ECO:0000318"/>
    <property type="project" value="GO_Central"/>
</dbReference>
<dbReference type="GO" id="GO:0035600">
    <property type="term" value="P:tRNA methylthiolation"/>
    <property type="evidence" value="ECO:0000318"/>
    <property type="project" value="GO_Central"/>
</dbReference>
<dbReference type="CDD" id="cd01335">
    <property type="entry name" value="Radical_SAM"/>
    <property type="match status" value="1"/>
</dbReference>
<dbReference type="FunFam" id="3.40.50.12160:FF:000003">
    <property type="entry name" value="CDK5 regulatory subunit-associated protein 1"/>
    <property type="match status" value="1"/>
</dbReference>
<dbReference type="FunFam" id="3.80.30.20:FF:000001">
    <property type="entry name" value="tRNA-2-methylthio-N(6)-dimethylallyladenosine synthase 2"/>
    <property type="match status" value="1"/>
</dbReference>
<dbReference type="Gene3D" id="3.40.50.12160">
    <property type="entry name" value="Methylthiotransferase, N-terminal domain"/>
    <property type="match status" value="1"/>
</dbReference>
<dbReference type="Gene3D" id="3.80.30.20">
    <property type="entry name" value="tm_1862 like domain"/>
    <property type="match status" value="1"/>
</dbReference>
<dbReference type="HAMAP" id="MF_01864">
    <property type="entry name" value="tRNA_metthiotr_MiaB"/>
    <property type="match status" value="1"/>
</dbReference>
<dbReference type="InterPro" id="IPR006638">
    <property type="entry name" value="Elp3/MiaA/NifB-like_rSAM"/>
</dbReference>
<dbReference type="InterPro" id="IPR005839">
    <property type="entry name" value="Methylthiotransferase"/>
</dbReference>
<dbReference type="InterPro" id="IPR020612">
    <property type="entry name" value="Methylthiotransferase_CS"/>
</dbReference>
<dbReference type="InterPro" id="IPR013848">
    <property type="entry name" value="Methylthiotransferase_N"/>
</dbReference>
<dbReference type="InterPro" id="IPR038135">
    <property type="entry name" value="Methylthiotransferase_N_sf"/>
</dbReference>
<dbReference type="InterPro" id="IPR006463">
    <property type="entry name" value="MiaB_methiolase"/>
</dbReference>
<dbReference type="InterPro" id="IPR007197">
    <property type="entry name" value="rSAM"/>
</dbReference>
<dbReference type="InterPro" id="IPR023404">
    <property type="entry name" value="rSAM_horseshoe"/>
</dbReference>
<dbReference type="InterPro" id="IPR002792">
    <property type="entry name" value="TRAM_dom"/>
</dbReference>
<dbReference type="NCBIfam" id="TIGR01574">
    <property type="entry name" value="miaB-methiolase"/>
    <property type="match status" value="1"/>
</dbReference>
<dbReference type="NCBIfam" id="TIGR00089">
    <property type="entry name" value="MiaB/RimO family radical SAM methylthiotransferase"/>
    <property type="match status" value="1"/>
</dbReference>
<dbReference type="PANTHER" id="PTHR43020">
    <property type="entry name" value="CDK5 REGULATORY SUBUNIT-ASSOCIATED PROTEIN 1"/>
    <property type="match status" value="1"/>
</dbReference>
<dbReference type="PANTHER" id="PTHR43020:SF2">
    <property type="entry name" value="MITOCHONDRIAL TRNA METHYLTHIOTRANSFERASE CDK5RAP1"/>
    <property type="match status" value="1"/>
</dbReference>
<dbReference type="Pfam" id="PF04055">
    <property type="entry name" value="Radical_SAM"/>
    <property type="match status" value="1"/>
</dbReference>
<dbReference type="Pfam" id="PF01938">
    <property type="entry name" value="TRAM"/>
    <property type="match status" value="1"/>
</dbReference>
<dbReference type="Pfam" id="PF00919">
    <property type="entry name" value="UPF0004"/>
    <property type="match status" value="1"/>
</dbReference>
<dbReference type="SFLD" id="SFLDF00273">
    <property type="entry name" value="(dimethylallyl)adenosine_tRNA"/>
    <property type="match status" value="1"/>
</dbReference>
<dbReference type="SFLD" id="SFLDG01082">
    <property type="entry name" value="B12-binding_domain_containing"/>
    <property type="match status" value="1"/>
</dbReference>
<dbReference type="SFLD" id="SFLDS00029">
    <property type="entry name" value="Radical_SAM"/>
    <property type="match status" value="1"/>
</dbReference>
<dbReference type="SMART" id="SM00729">
    <property type="entry name" value="Elp3"/>
    <property type="match status" value="1"/>
</dbReference>
<dbReference type="SUPFAM" id="SSF102114">
    <property type="entry name" value="Radical SAM enzymes"/>
    <property type="match status" value="1"/>
</dbReference>
<dbReference type="PROSITE" id="PS51449">
    <property type="entry name" value="MTTASE_N"/>
    <property type="match status" value="1"/>
</dbReference>
<dbReference type="PROSITE" id="PS01278">
    <property type="entry name" value="MTTASE_RADICAL"/>
    <property type="match status" value="1"/>
</dbReference>
<dbReference type="PROSITE" id="PS51918">
    <property type="entry name" value="RADICAL_SAM"/>
    <property type="match status" value="1"/>
</dbReference>
<dbReference type="PROSITE" id="PS50926">
    <property type="entry name" value="TRAM"/>
    <property type="match status" value="1"/>
</dbReference>
<feature type="chain" id="PRO_0000374320" description="tRNA-2-methylthio-N(6)-dimethylallyladenosine synthase">
    <location>
        <begin position="1"/>
        <end position="446"/>
    </location>
</feature>
<feature type="domain" description="MTTase N-terminal" evidence="1">
    <location>
        <begin position="5"/>
        <end position="121"/>
    </location>
</feature>
<feature type="domain" description="Radical SAM core" evidence="2">
    <location>
        <begin position="145"/>
        <end position="375"/>
    </location>
</feature>
<feature type="domain" description="TRAM" evidence="1">
    <location>
        <begin position="378"/>
        <end position="440"/>
    </location>
</feature>
<feature type="binding site" evidence="1">
    <location>
        <position position="14"/>
    </location>
    <ligand>
        <name>[4Fe-4S] cluster</name>
        <dbReference type="ChEBI" id="CHEBI:49883"/>
        <label>1</label>
    </ligand>
</feature>
<feature type="binding site" evidence="1">
    <location>
        <position position="50"/>
    </location>
    <ligand>
        <name>[4Fe-4S] cluster</name>
        <dbReference type="ChEBI" id="CHEBI:49883"/>
        <label>1</label>
    </ligand>
</feature>
<feature type="binding site" evidence="1">
    <location>
        <position position="84"/>
    </location>
    <ligand>
        <name>[4Fe-4S] cluster</name>
        <dbReference type="ChEBI" id="CHEBI:49883"/>
        <label>1</label>
    </ligand>
</feature>
<feature type="binding site" evidence="1">
    <location>
        <position position="159"/>
    </location>
    <ligand>
        <name>[4Fe-4S] cluster</name>
        <dbReference type="ChEBI" id="CHEBI:49883"/>
        <label>2</label>
        <note>4Fe-4S-S-AdoMet</note>
    </ligand>
</feature>
<feature type="binding site" evidence="1">
    <location>
        <position position="163"/>
    </location>
    <ligand>
        <name>[4Fe-4S] cluster</name>
        <dbReference type="ChEBI" id="CHEBI:49883"/>
        <label>2</label>
        <note>4Fe-4S-S-AdoMet</note>
    </ligand>
</feature>
<feature type="binding site" evidence="1">
    <location>
        <position position="166"/>
    </location>
    <ligand>
        <name>[4Fe-4S] cluster</name>
        <dbReference type="ChEBI" id="CHEBI:49883"/>
        <label>2</label>
        <note>4Fe-4S-S-AdoMet</note>
    </ligand>
</feature>
<evidence type="ECO:0000255" key="1">
    <source>
        <dbReference type="HAMAP-Rule" id="MF_01864"/>
    </source>
</evidence>
<evidence type="ECO:0000255" key="2">
    <source>
        <dbReference type="PROSITE-ProRule" id="PRU01266"/>
    </source>
</evidence>
<protein>
    <recommendedName>
        <fullName evidence="1">tRNA-2-methylthio-N(6)-dimethylallyladenosine synthase</fullName>
        <ecNumber evidence="1">2.8.4.3</ecNumber>
    </recommendedName>
    <alternativeName>
        <fullName evidence="1">(Dimethylallyl)adenosine tRNA methylthiotransferase MiaB</fullName>
    </alternativeName>
    <alternativeName>
        <fullName evidence="1">tRNA-i(6)A37 methylthiotransferase</fullName>
    </alternativeName>
</protein>
<sequence length="446" mass="49771">MTENKYLYVETFGCQMNVNDSEKIATLLKDEGYLPTDDPERADLVILNTCSVRAKAEQKVYGHLGRFKGVRSRKKGFLLGVGGCVAQQEGERLLQKVPWLDLVFGTHNLHLLPEIVRAAERGERRAEVGFIDNETRLDLFPETGGEGGVTRFVTVMQGCDNFCSYCIVPYVRGREISRRSSDIIDEVRKSVAEGVKEVTLLGQNVNSYGLKTEGELSFAGLIRRIAEVEGLERIRFTTSHPKDISPELIACFAEVPKLCGHIHLPAQSGSDAVLARMNRGYTRAGYLEKVEALRAARPGIQFTGDMIVGFPGETEEDFQATISLMEEVRYADLFSFIYSPRPETAAAGIRDTVSRKEKQSRLDRLQTLQQQMKRERNISFVGTRQLVLVEGVSKRGDQLYGRIDGNRIVNFAADQSLIGTMAEVTITQDYQNSLLGEIVTDKGDAR</sequence>
<comment type="function">
    <text evidence="1">Catalyzes the methylthiolation of N6-(dimethylallyl)adenosine (i(6)A), leading to the formation of 2-methylthio-N6-(dimethylallyl)adenosine (ms(2)i(6)A) at position 37 in tRNAs that read codons beginning with uridine.</text>
</comment>
<comment type="catalytic activity">
    <reaction evidence="1">
        <text>N(6)-dimethylallyladenosine(37) in tRNA + (sulfur carrier)-SH + AH2 + 2 S-adenosyl-L-methionine = 2-methylsulfanyl-N(6)-dimethylallyladenosine(37) in tRNA + (sulfur carrier)-H + 5'-deoxyadenosine + L-methionine + A + S-adenosyl-L-homocysteine + 2 H(+)</text>
        <dbReference type="Rhea" id="RHEA:37067"/>
        <dbReference type="Rhea" id="RHEA-COMP:10375"/>
        <dbReference type="Rhea" id="RHEA-COMP:10376"/>
        <dbReference type="Rhea" id="RHEA-COMP:14737"/>
        <dbReference type="Rhea" id="RHEA-COMP:14739"/>
        <dbReference type="ChEBI" id="CHEBI:13193"/>
        <dbReference type="ChEBI" id="CHEBI:15378"/>
        <dbReference type="ChEBI" id="CHEBI:17319"/>
        <dbReference type="ChEBI" id="CHEBI:17499"/>
        <dbReference type="ChEBI" id="CHEBI:29917"/>
        <dbReference type="ChEBI" id="CHEBI:57844"/>
        <dbReference type="ChEBI" id="CHEBI:57856"/>
        <dbReference type="ChEBI" id="CHEBI:59789"/>
        <dbReference type="ChEBI" id="CHEBI:64428"/>
        <dbReference type="ChEBI" id="CHEBI:74415"/>
        <dbReference type="ChEBI" id="CHEBI:74417"/>
        <dbReference type="EC" id="2.8.4.3"/>
    </reaction>
</comment>
<comment type="cofactor">
    <cofactor evidence="1">
        <name>[4Fe-4S] cluster</name>
        <dbReference type="ChEBI" id="CHEBI:49883"/>
    </cofactor>
    <text evidence="1">Binds 2 [4Fe-4S] clusters. One cluster is coordinated with 3 cysteines and an exchangeable S-adenosyl-L-methionine.</text>
</comment>
<comment type="subunit">
    <text evidence="1">Monomer.</text>
</comment>
<comment type="subcellular location">
    <subcellularLocation>
        <location evidence="1">Cytoplasm</location>
    </subcellularLocation>
</comment>
<comment type="similarity">
    <text evidence="1">Belongs to the methylthiotransferase family. MiaB subfamily.</text>
</comment>
<reference key="1">
    <citation type="journal article" date="2003" name="Science">
        <title>Genome of Geobacter sulfurreducens: metal reduction in subsurface environments.</title>
        <authorList>
            <person name="Methe B.A."/>
            <person name="Nelson K.E."/>
            <person name="Eisen J.A."/>
            <person name="Paulsen I.T."/>
            <person name="Nelson W.C."/>
            <person name="Heidelberg J.F."/>
            <person name="Wu D."/>
            <person name="Wu M."/>
            <person name="Ward N.L."/>
            <person name="Beanan M.J."/>
            <person name="Dodson R.J."/>
            <person name="Madupu R."/>
            <person name="Brinkac L.M."/>
            <person name="Daugherty S.C."/>
            <person name="DeBoy R.T."/>
            <person name="Durkin A.S."/>
            <person name="Gwinn M.L."/>
            <person name="Kolonay J.F."/>
            <person name="Sullivan S.A."/>
            <person name="Haft D.H."/>
            <person name="Selengut J."/>
            <person name="Davidsen T.M."/>
            <person name="Zafar N."/>
            <person name="White O."/>
            <person name="Tran B."/>
            <person name="Romero C."/>
            <person name="Forberger H.A."/>
            <person name="Weidman J.F."/>
            <person name="Khouri H.M."/>
            <person name="Feldblyum T.V."/>
            <person name="Utterback T.R."/>
            <person name="Van Aken S.E."/>
            <person name="Lovley D.R."/>
            <person name="Fraser C.M."/>
        </authorList>
    </citation>
    <scope>NUCLEOTIDE SEQUENCE [LARGE SCALE GENOMIC DNA]</scope>
    <source>
        <strain>ATCC 51573 / DSM 12127 / PCA</strain>
    </source>
</reference>
<proteinExistence type="inferred from homology"/>
<name>MIAB_GEOSL</name>